<protein>
    <recommendedName>
        <fullName evidence="1">DNA ligase B</fullName>
        <ecNumber evidence="1">6.5.1.2</ecNumber>
    </recommendedName>
    <alternativeName>
        <fullName evidence="1">Polydeoxyribonucleotide synthase [NAD(+)] B</fullName>
    </alternativeName>
</protein>
<organism>
    <name type="scientific">Pseudomonas fluorescens (strain Pf0-1)</name>
    <dbReference type="NCBI Taxonomy" id="205922"/>
    <lineage>
        <taxon>Bacteria</taxon>
        <taxon>Pseudomonadati</taxon>
        <taxon>Pseudomonadota</taxon>
        <taxon>Gammaproteobacteria</taxon>
        <taxon>Pseudomonadales</taxon>
        <taxon>Pseudomonadaceae</taxon>
        <taxon>Pseudomonas</taxon>
    </lineage>
</organism>
<comment type="function">
    <text evidence="1">Catalyzes the formation of phosphodiester linkages between 5'-phosphoryl and 3'-hydroxyl groups in double-stranded DNA using NAD as a coenzyme and as the energy source for the reaction.</text>
</comment>
<comment type="catalytic activity">
    <reaction evidence="1">
        <text>NAD(+) + (deoxyribonucleotide)n-3'-hydroxyl + 5'-phospho-(deoxyribonucleotide)m = (deoxyribonucleotide)n+m + AMP + beta-nicotinamide D-nucleotide.</text>
        <dbReference type="EC" id="6.5.1.2"/>
    </reaction>
</comment>
<comment type="similarity">
    <text evidence="1">Belongs to the NAD-dependent DNA ligase family. LigB subfamily.</text>
</comment>
<feature type="chain" id="PRO_0000313546" description="DNA ligase B">
    <location>
        <begin position="1"/>
        <end position="558"/>
    </location>
</feature>
<feature type="active site" description="N6-AMP-lysine intermediate" evidence="1">
    <location>
        <position position="126"/>
    </location>
</feature>
<accession>Q3K5E7</accession>
<reference key="1">
    <citation type="journal article" date="2009" name="Genome Biol.">
        <title>Genomic and genetic analyses of diversity and plant interactions of Pseudomonas fluorescens.</title>
        <authorList>
            <person name="Silby M.W."/>
            <person name="Cerdeno-Tarraga A.M."/>
            <person name="Vernikos G.S."/>
            <person name="Giddens S.R."/>
            <person name="Jackson R.W."/>
            <person name="Preston G.M."/>
            <person name="Zhang X.-X."/>
            <person name="Moon C.D."/>
            <person name="Gehrig S.M."/>
            <person name="Godfrey S.A.C."/>
            <person name="Knight C.G."/>
            <person name="Malone J.G."/>
            <person name="Robinson Z."/>
            <person name="Spiers A.J."/>
            <person name="Harris S."/>
            <person name="Challis G.L."/>
            <person name="Yaxley A.M."/>
            <person name="Harris D."/>
            <person name="Seeger K."/>
            <person name="Murphy L."/>
            <person name="Rutter S."/>
            <person name="Squares R."/>
            <person name="Quail M.A."/>
            <person name="Saunders E."/>
            <person name="Mavromatis K."/>
            <person name="Brettin T.S."/>
            <person name="Bentley S.D."/>
            <person name="Hothersall J."/>
            <person name="Stephens E."/>
            <person name="Thomas C.M."/>
            <person name="Parkhill J."/>
            <person name="Levy S.B."/>
            <person name="Rainey P.B."/>
            <person name="Thomson N.R."/>
        </authorList>
    </citation>
    <scope>NUCLEOTIDE SEQUENCE [LARGE SCALE GENOMIC DNA]</scope>
    <source>
        <strain>Pf0-1</strain>
    </source>
</reference>
<gene>
    <name evidence="1" type="primary">ligB</name>
    <name type="ordered locus">Pfl01_5270</name>
</gene>
<proteinExistence type="inferred from homology"/>
<sequence length="558" mass="62268">MLATLRLFLFFLPFFHLHTFADDCPDWAAARASSEVVALQQQIDRWDDAYHREGRSVIADELYDQSRLRLNQWRQCFNLPSPPEPLRTASGPVAHPVAHTGLDKLHDAADIATWLRDRQNVWVQPKVDGVAVTLIYRDGRLHQAISRGDGVRGQDWTASAKKIGAIPQQLTQPQDLLVQGELYWRLNGHMQARAGSANARATVAGLLGRKDLGAEHAAGIGLFVWDWPHGPRDLPERITALTQFGFPTTVPYTQAVASLNDAQHWRDHWYHSPLPFATDGVVLRQSLRPPAERWQARPPYWAVAWKYPFAQALADVRKVHFKIGRTGRITPVLELSPVMLDDRQIKRVSVSSLRRWQELDIRPGDQVAISLAGLTIPRLDSVVLRSTERADLNVPLASDFHALSCWQPTPGCESQFLARLTWLSGKQGLALPHVGRGTWEKLLETGRLNSLLDWLTLDGPELANIAGLGERSSARLLHSFHSARQRPFAQWLKALGLPPTGQATLADSWQALAQRNTEQWQAEAGIGPGRAAQLSAFFRDPQVLTLSETLQAAGVDGF</sequence>
<name>LIGB_PSEPF</name>
<dbReference type="EC" id="6.5.1.2" evidence="1"/>
<dbReference type="EMBL" id="CP000094">
    <property type="protein sequence ID" value="ABA77007.1"/>
    <property type="molecule type" value="Genomic_DNA"/>
</dbReference>
<dbReference type="RefSeq" id="WP_011336331.1">
    <property type="nucleotide sequence ID" value="NC_007492.2"/>
</dbReference>
<dbReference type="SMR" id="Q3K5E7"/>
<dbReference type="KEGG" id="pfo:Pfl01_5270"/>
<dbReference type="eggNOG" id="COG0272">
    <property type="taxonomic scope" value="Bacteria"/>
</dbReference>
<dbReference type="HOGENOM" id="CLU_489786_0_0_6"/>
<dbReference type="Proteomes" id="UP000002704">
    <property type="component" value="Chromosome"/>
</dbReference>
<dbReference type="GO" id="GO:0003911">
    <property type="term" value="F:DNA ligase (NAD+) activity"/>
    <property type="evidence" value="ECO:0007669"/>
    <property type="project" value="UniProtKB-UniRule"/>
</dbReference>
<dbReference type="GO" id="GO:0006281">
    <property type="term" value="P:DNA repair"/>
    <property type="evidence" value="ECO:0007669"/>
    <property type="project" value="UniProtKB-KW"/>
</dbReference>
<dbReference type="GO" id="GO:0006260">
    <property type="term" value="P:DNA replication"/>
    <property type="evidence" value="ECO:0007669"/>
    <property type="project" value="UniProtKB-KW"/>
</dbReference>
<dbReference type="Gene3D" id="1.10.150.20">
    <property type="entry name" value="5' to 3' exonuclease, C-terminal subdomain"/>
    <property type="match status" value="2"/>
</dbReference>
<dbReference type="Gene3D" id="3.30.470.30">
    <property type="entry name" value="DNA ligase/mRNA capping enzyme"/>
    <property type="match status" value="1"/>
</dbReference>
<dbReference type="Gene3D" id="1.10.287.610">
    <property type="entry name" value="Helix hairpin bin"/>
    <property type="match status" value="1"/>
</dbReference>
<dbReference type="Gene3D" id="2.40.50.140">
    <property type="entry name" value="Nucleic acid-binding proteins"/>
    <property type="match status" value="1"/>
</dbReference>
<dbReference type="HAMAP" id="MF_01587">
    <property type="entry name" value="DNA_ligase_B"/>
    <property type="match status" value="1"/>
</dbReference>
<dbReference type="InterPro" id="IPR001679">
    <property type="entry name" value="DNA_ligase"/>
</dbReference>
<dbReference type="InterPro" id="IPR020923">
    <property type="entry name" value="DNA_ligase_B"/>
</dbReference>
<dbReference type="InterPro" id="IPR033136">
    <property type="entry name" value="DNA_ligase_CS"/>
</dbReference>
<dbReference type="InterPro" id="IPR013839">
    <property type="entry name" value="DNAligase_adenylation"/>
</dbReference>
<dbReference type="InterPro" id="IPR013840">
    <property type="entry name" value="DNAligase_N"/>
</dbReference>
<dbReference type="InterPro" id="IPR012340">
    <property type="entry name" value="NA-bd_OB-fold"/>
</dbReference>
<dbReference type="InterPro" id="IPR050326">
    <property type="entry name" value="NAD_dep_DNA_ligaseB"/>
</dbReference>
<dbReference type="InterPro" id="IPR004150">
    <property type="entry name" value="NAD_DNA_ligase_OB"/>
</dbReference>
<dbReference type="InterPro" id="IPR010994">
    <property type="entry name" value="RuvA_2-like"/>
</dbReference>
<dbReference type="NCBIfam" id="NF005987">
    <property type="entry name" value="PRK08097.1"/>
    <property type="match status" value="1"/>
</dbReference>
<dbReference type="PANTHER" id="PTHR47810">
    <property type="entry name" value="DNA LIGASE"/>
    <property type="match status" value="1"/>
</dbReference>
<dbReference type="PANTHER" id="PTHR47810:SF1">
    <property type="entry name" value="DNA LIGASE B"/>
    <property type="match status" value="1"/>
</dbReference>
<dbReference type="Pfam" id="PF01653">
    <property type="entry name" value="DNA_ligase_aden"/>
    <property type="match status" value="1"/>
</dbReference>
<dbReference type="Pfam" id="PF03120">
    <property type="entry name" value="DNA_ligase_OB"/>
    <property type="match status" value="1"/>
</dbReference>
<dbReference type="PIRSF" id="PIRSF001604">
    <property type="entry name" value="LigA"/>
    <property type="match status" value="1"/>
</dbReference>
<dbReference type="SMART" id="SM00532">
    <property type="entry name" value="LIGANc"/>
    <property type="match status" value="1"/>
</dbReference>
<dbReference type="SUPFAM" id="SSF56091">
    <property type="entry name" value="DNA ligase/mRNA capping enzyme, catalytic domain"/>
    <property type="match status" value="1"/>
</dbReference>
<dbReference type="SUPFAM" id="SSF50249">
    <property type="entry name" value="Nucleic acid-binding proteins"/>
    <property type="match status" value="1"/>
</dbReference>
<dbReference type="SUPFAM" id="SSF47781">
    <property type="entry name" value="RuvA domain 2-like"/>
    <property type="match status" value="1"/>
</dbReference>
<dbReference type="PROSITE" id="PS01056">
    <property type="entry name" value="DNA_LIGASE_N2"/>
    <property type="match status" value="1"/>
</dbReference>
<evidence type="ECO:0000255" key="1">
    <source>
        <dbReference type="HAMAP-Rule" id="MF_01587"/>
    </source>
</evidence>
<keyword id="KW-0227">DNA damage</keyword>
<keyword id="KW-0234">DNA repair</keyword>
<keyword id="KW-0235">DNA replication</keyword>
<keyword id="KW-0436">Ligase</keyword>
<keyword id="KW-0520">NAD</keyword>